<accession>A9LZQ8</accession>
<sequence length="238" mass="27076">MTDTAENQTPNDRQAGHPRSIRSFVLRQSHMTAAQQRAIDTLWDSFGIDYQATPVDLDANFGSNRPKILEIGFGMGTATAEIALRLPETDFLAIDVHGPGVGNLLKLINENHLENIRVMRHDAVEVVENMLQDGSLDGIHIFFPDPWHKKRHHKRRLIQAPFIAKLLPKLKTGGYIHLATDWEEYAQQMLEVLSSFDSLQNTATDYAPTPDYRPETKFEARGKRLGHGVWDLVFKRIR</sequence>
<evidence type="ECO:0000250" key="1"/>
<evidence type="ECO:0000255" key="2">
    <source>
        <dbReference type="HAMAP-Rule" id="MF_01057"/>
    </source>
</evidence>
<evidence type="ECO:0000256" key="3">
    <source>
        <dbReference type="SAM" id="MobiDB-lite"/>
    </source>
</evidence>
<feature type="chain" id="PRO_1000084446" description="tRNA (guanine-N(7)-)-methyltransferase">
    <location>
        <begin position="1"/>
        <end position="238"/>
    </location>
</feature>
<feature type="region of interest" description="Disordered" evidence="3">
    <location>
        <begin position="1"/>
        <end position="20"/>
    </location>
</feature>
<feature type="compositionally biased region" description="Polar residues" evidence="3">
    <location>
        <begin position="1"/>
        <end position="12"/>
    </location>
</feature>
<feature type="active site" evidence="1">
    <location>
        <position position="145"/>
    </location>
</feature>
<feature type="binding site" evidence="2">
    <location>
        <position position="70"/>
    </location>
    <ligand>
        <name>S-adenosyl-L-methionine</name>
        <dbReference type="ChEBI" id="CHEBI:59789"/>
    </ligand>
</feature>
<feature type="binding site" evidence="2">
    <location>
        <position position="95"/>
    </location>
    <ligand>
        <name>S-adenosyl-L-methionine</name>
        <dbReference type="ChEBI" id="CHEBI:59789"/>
    </ligand>
</feature>
<feature type="binding site" evidence="2">
    <location>
        <position position="122"/>
    </location>
    <ligand>
        <name>S-adenosyl-L-methionine</name>
        <dbReference type="ChEBI" id="CHEBI:59789"/>
    </ligand>
</feature>
<feature type="binding site" evidence="2">
    <location>
        <position position="145"/>
    </location>
    <ligand>
        <name>S-adenosyl-L-methionine</name>
        <dbReference type="ChEBI" id="CHEBI:59789"/>
    </ligand>
</feature>
<feature type="binding site" evidence="2">
    <location>
        <position position="149"/>
    </location>
    <ligand>
        <name>substrate</name>
    </ligand>
</feature>
<feature type="binding site" evidence="2">
    <location>
        <position position="181"/>
    </location>
    <ligand>
        <name>substrate</name>
    </ligand>
</feature>
<feature type="binding site" evidence="2">
    <location>
        <begin position="216"/>
        <end position="219"/>
    </location>
    <ligand>
        <name>substrate</name>
    </ligand>
</feature>
<keyword id="KW-0489">Methyltransferase</keyword>
<keyword id="KW-0949">S-adenosyl-L-methionine</keyword>
<keyword id="KW-0808">Transferase</keyword>
<keyword id="KW-0819">tRNA processing</keyword>
<protein>
    <recommendedName>
        <fullName evidence="2">tRNA (guanine-N(7)-)-methyltransferase</fullName>
        <ecNumber evidence="2">2.1.1.33</ecNumber>
    </recommendedName>
    <alternativeName>
        <fullName evidence="2">tRNA (guanine(46)-N(7))-methyltransferase</fullName>
    </alternativeName>
    <alternativeName>
        <fullName evidence="2">tRNA(m7G46)-methyltransferase</fullName>
    </alternativeName>
</protein>
<name>TRMB_NEIM0</name>
<dbReference type="EC" id="2.1.1.33" evidence="2"/>
<dbReference type="EMBL" id="CP000381">
    <property type="protein sequence ID" value="ABX73416.1"/>
    <property type="molecule type" value="Genomic_DNA"/>
</dbReference>
<dbReference type="RefSeq" id="WP_012221744.1">
    <property type="nucleotide sequence ID" value="NC_010120.1"/>
</dbReference>
<dbReference type="SMR" id="A9LZQ8"/>
<dbReference type="KEGG" id="nmn:NMCC_1243"/>
<dbReference type="HOGENOM" id="CLU_050910_0_1_4"/>
<dbReference type="UniPathway" id="UPA00989"/>
<dbReference type="Proteomes" id="UP000001177">
    <property type="component" value="Chromosome"/>
</dbReference>
<dbReference type="GO" id="GO:0043527">
    <property type="term" value="C:tRNA methyltransferase complex"/>
    <property type="evidence" value="ECO:0007669"/>
    <property type="project" value="TreeGrafter"/>
</dbReference>
<dbReference type="GO" id="GO:0008176">
    <property type="term" value="F:tRNA (guanine(46)-N7)-methyltransferase activity"/>
    <property type="evidence" value="ECO:0007669"/>
    <property type="project" value="UniProtKB-UniRule"/>
</dbReference>
<dbReference type="CDD" id="cd02440">
    <property type="entry name" value="AdoMet_MTases"/>
    <property type="match status" value="1"/>
</dbReference>
<dbReference type="FunFam" id="3.40.50.150:FF:000035">
    <property type="entry name" value="tRNA (guanine-N(7)-)-methyltransferase"/>
    <property type="match status" value="1"/>
</dbReference>
<dbReference type="Gene3D" id="3.40.50.150">
    <property type="entry name" value="Vaccinia Virus protein VP39"/>
    <property type="match status" value="1"/>
</dbReference>
<dbReference type="HAMAP" id="MF_01057">
    <property type="entry name" value="tRNA_methyltr_TrmB"/>
    <property type="match status" value="1"/>
</dbReference>
<dbReference type="InterPro" id="IPR029063">
    <property type="entry name" value="SAM-dependent_MTases_sf"/>
</dbReference>
<dbReference type="InterPro" id="IPR003358">
    <property type="entry name" value="tRNA_(Gua-N-7)_MeTrfase_Trmb"/>
</dbReference>
<dbReference type="InterPro" id="IPR055361">
    <property type="entry name" value="tRNA_methyltr_TrmB_bact"/>
</dbReference>
<dbReference type="NCBIfam" id="TIGR00091">
    <property type="entry name" value="tRNA (guanosine(46)-N7)-methyltransferase TrmB"/>
    <property type="match status" value="1"/>
</dbReference>
<dbReference type="PANTHER" id="PTHR23417">
    <property type="entry name" value="3-DEOXY-D-MANNO-OCTULOSONIC-ACID TRANSFERASE/TRNA GUANINE-N 7 - -METHYLTRANSFERASE"/>
    <property type="match status" value="1"/>
</dbReference>
<dbReference type="PANTHER" id="PTHR23417:SF14">
    <property type="entry name" value="PENTACOTRIPEPTIDE-REPEAT REGION OF PRORP DOMAIN-CONTAINING PROTEIN"/>
    <property type="match status" value="1"/>
</dbReference>
<dbReference type="Pfam" id="PF02390">
    <property type="entry name" value="Methyltransf_4"/>
    <property type="match status" value="1"/>
</dbReference>
<dbReference type="SUPFAM" id="SSF53335">
    <property type="entry name" value="S-adenosyl-L-methionine-dependent methyltransferases"/>
    <property type="match status" value="1"/>
</dbReference>
<dbReference type="PROSITE" id="PS51625">
    <property type="entry name" value="SAM_MT_TRMB"/>
    <property type="match status" value="1"/>
</dbReference>
<comment type="function">
    <text evidence="2">Catalyzes the formation of N(7)-methylguanine at position 46 (m7G46) in tRNA.</text>
</comment>
<comment type="catalytic activity">
    <reaction evidence="2">
        <text>guanosine(46) in tRNA + S-adenosyl-L-methionine = N(7)-methylguanosine(46) in tRNA + S-adenosyl-L-homocysteine</text>
        <dbReference type="Rhea" id="RHEA:42708"/>
        <dbReference type="Rhea" id="RHEA-COMP:10188"/>
        <dbReference type="Rhea" id="RHEA-COMP:10189"/>
        <dbReference type="ChEBI" id="CHEBI:57856"/>
        <dbReference type="ChEBI" id="CHEBI:59789"/>
        <dbReference type="ChEBI" id="CHEBI:74269"/>
        <dbReference type="ChEBI" id="CHEBI:74480"/>
        <dbReference type="EC" id="2.1.1.33"/>
    </reaction>
</comment>
<comment type="pathway">
    <text evidence="2">tRNA modification; N(7)-methylguanine-tRNA biosynthesis.</text>
</comment>
<comment type="similarity">
    <text evidence="2">Belongs to the class I-like SAM-binding methyltransferase superfamily. TrmB family.</text>
</comment>
<proteinExistence type="inferred from homology"/>
<reference key="1">
    <citation type="journal article" date="2008" name="Genomics">
        <title>Characterization of ST-4821 complex, a unique Neisseria meningitidis clone.</title>
        <authorList>
            <person name="Peng J."/>
            <person name="Yang L."/>
            <person name="Yang F."/>
            <person name="Yang J."/>
            <person name="Yan Y."/>
            <person name="Nie H."/>
            <person name="Zhang X."/>
            <person name="Xiong Z."/>
            <person name="Jiang Y."/>
            <person name="Cheng F."/>
            <person name="Xu X."/>
            <person name="Chen S."/>
            <person name="Sun L."/>
            <person name="Li W."/>
            <person name="Shen Y."/>
            <person name="Shao Z."/>
            <person name="Liang X."/>
            <person name="Xu J."/>
            <person name="Jin Q."/>
        </authorList>
    </citation>
    <scope>NUCLEOTIDE SEQUENCE [LARGE SCALE GENOMIC DNA]</scope>
    <source>
        <strain>053442</strain>
    </source>
</reference>
<organism>
    <name type="scientific">Neisseria meningitidis serogroup C (strain 053442)</name>
    <dbReference type="NCBI Taxonomy" id="374833"/>
    <lineage>
        <taxon>Bacteria</taxon>
        <taxon>Pseudomonadati</taxon>
        <taxon>Pseudomonadota</taxon>
        <taxon>Betaproteobacteria</taxon>
        <taxon>Neisseriales</taxon>
        <taxon>Neisseriaceae</taxon>
        <taxon>Neisseria</taxon>
    </lineage>
</organism>
<gene>
    <name evidence="2" type="primary">trmB</name>
    <name type="ordered locus">NMCC_1243</name>
</gene>